<organism>
    <name type="scientific">Streptococcus equi subsp. zooepidemicus (strain H70)</name>
    <dbReference type="NCBI Taxonomy" id="553483"/>
    <lineage>
        <taxon>Bacteria</taxon>
        <taxon>Bacillati</taxon>
        <taxon>Bacillota</taxon>
        <taxon>Bacilli</taxon>
        <taxon>Lactobacillales</taxon>
        <taxon>Streptococcaceae</taxon>
        <taxon>Streptococcus</taxon>
    </lineage>
</organism>
<keyword id="KW-0227">DNA damage</keyword>
<keyword id="KW-0233">DNA recombination</keyword>
<keyword id="KW-0234">DNA repair</keyword>
<keyword id="KW-0479">Metal-binding</keyword>
<keyword id="KW-0862">Zinc</keyword>
<keyword id="KW-0863">Zinc-finger</keyword>
<comment type="function">
    <text evidence="1">May play a role in DNA repair. It seems to be involved in an RecBC-independent recombinational process of DNA repair. It may act with RecF and RecO.</text>
</comment>
<comment type="similarity">
    <text evidence="1">Belongs to the RecR family.</text>
</comment>
<protein>
    <recommendedName>
        <fullName evidence="1">Recombination protein RecR</fullName>
    </recommendedName>
</protein>
<gene>
    <name evidence="1" type="primary">recR</name>
    <name type="ordered locus">SZO_13580</name>
</gene>
<evidence type="ECO:0000255" key="1">
    <source>
        <dbReference type="HAMAP-Rule" id="MF_00017"/>
    </source>
</evidence>
<feature type="chain" id="PRO_1000201871" description="Recombination protein RecR">
    <location>
        <begin position="1"/>
        <end position="198"/>
    </location>
</feature>
<feature type="domain" description="Toprim" evidence="1">
    <location>
        <begin position="80"/>
        <end position="175"/>
    </location>
</feature>
<feature type="zinc finger region" description="C4-type" evidence="1">
    <location>
        <begin position="57"/>
        <end position="72"/>
    </location>
</feature>
<proteinExistence type="inferred from homology"/>
<reference key="1">
    <citation type="journal article" date="2009" name="PLoS Pathog.">
        <title>Genomic evidence for the evolution of Streptococcus equi: host restriction, increased virulence, and genetic exchange with human pathogens.</title>
        <authorList>
            <person name="Holden M.T.G."/>
            <person name="Heather Z."/>
            <person name="Paillot R."/>
            <person name="Steward K.F."/>
            <person name="Webb K."/>
            <person name="Ainslie F."/>
            <person name="Jourdan T."/>
            <person name="Bason N.C."/>
            <person name="Holroyd N.E."/>
            <person name="Mungall K."/>
            <person name="Quail M.A."/>
            <person name="Sanders M."/>
            <person name="Simmonds M."/>
            <person name="Willey D."/>
            <person name="Brooks K."/>
            <person name="Aanensen D.M."/>
            <person name="Spratt B.G."/>
            <person name="Jolley K.A."/>
            <person name="Maiden M.C.J."/>
            <person name="Kehoe M."/>
            <person name="Chanter N."/>
            <person name="Bentley S.D."/>
            <person name="Robinson C."/>
            <person name="Maskell D.J."/>
            <person name="Parkhill J."/>
            <person name="Waller A.S."/>
        </authorList>
    </citation>
    <scope>NUCLEOTIDE SEQUENCE [LARGE SCALE GENOMIC DNA]</scope>
    <source>
        <strain>H70</strain>
    </source>
</reference>
<name>RECR_STRS7</name>
<dbReference type="EMBL" id="FM204884">
    <property type="protein sequence ID" value="CAW99924.1"/>
    <property type="molecule type" value="Genomic_DNA"/>
</dbReference>
<dbReference type="SMR" id="C0MCW0"/>
<dbReference type="KEGG" id="seq:SZO_13580"/>
<dbReference type="eggNOG" id="COG0353">
    <property type="taxonomic scope" value="Bacteria"/>
</dbReference>
<dbReference type="HOGENOM" id="CLU_060739_1_0_9"/>
<dbReference type="Proteomes" id="UP000001368">
    <property type="component" value="Chromosome"/>
</dbReference>
<dbReference type="GO" id="GO:0003677">
    <property type="term" value="F:DNA binding"/>
    <property type="evidence" value="ECO:0007669"/>
    <property type="project" value="UniProtKB-UniRule"/>
</dbReference>
<dbReference type="GO" id="GO:0008270">
    <property type="term" value="F:zinc ion binding"/>
    <property type="evidence" value="ECO:0007669"/>
    <property type="project" value="UniProtKB-KW"/>
</dbReference>
<dbReference type="GO" id="GO:0006310">
    <property type="term" value="P:DNA recombination"/>
    <property type="evidence" value="ECO:0007669"/>
    <property type="project" value="UniProtKB-UniRule"/>
</dbReference>
<dbReference type="GO" id="GO:0006281">
    <property type="term" value="P:DNA repair"/>
    <property type="evidence" value="ECO:0007669"/>
    <property type="project" value="UniProtKB-UniRule"/>
</dbReference>
<dbReference type="CDD" id="cd01025">
    <property type="entry name" value="TOPRIM_recR"/>
    <property type="match status" value="1"/>
</dbReference>
<dbReference type="Gene3D" id="3.30.60.80">
    <property type="match status" value="1"/>
</dbReference>
<dbReference type="Gene3D" id="3.40.1360.10">
    <property type="match status" value="1"/>
</dbReference>
<dbReference type="Gene3D" id="6.10.250.240">
    <property type="match status" value="1"/>
</dbReference>
<dbReference type="Gene3D" id="1.10.8.420">
    <property type="entry name" value="RecR Domain 1"/>
    <property type="match status" value="1"/>
</dbReference>
<dbReference type="HAMAP" id="MF_00017">
    <property type="entry name" value="RecR"/>
    <property type="match status" value="1"/>
</dbReference>
<dbReference type="InterPro" id="IPR000093">
    <property type="entry name" value="DNA_Rcmb_RecR"/>
</dbReference>
<dbReference type="InterPro" id="IPR023627">
    <property type="entry name" value="Rcmb_RecR"/>
</dbReference>
<dbReference type="InterPro" id="IPR015967">
    <property type="entry name" value="Rcmb_RecR_Znf"/>
</dbReference>
<dbReference type="InterPro" id="IPR006171">
    <property type="entry name" value="TOPRIM_dom"/>
</dbReference>
<dbReference type="InterPro" id="IPR034137">
    <property type="entry name" value="TOPRIM_RecR"/>
</dbReference>
<dbReference type="NCBIfam" id="TIGR00615">
    <property type="entry name" value="recR"/>
    <property type="match status" value="1"/>
</dbReference>
<dbReference type="PANTHER" id="PTHR30446">
    <property type="entry name" value="RECOMBINATION PROTEIN RECR"/>
    <property type="match status" value="1"/>
</dbReference>
<dbReference type="PANTHER" id="PTHR30446:SF0">
    <property type="entry name" value="RECOMBINATION PROTEIN RECR"/>
    <property type="match status" value="1"/>
</dbReference>
<dbReference type="Pfam" id="PF21175">
    <property type="entry name" value="RecR_C"/>
    <property type="match status" value="1"/>
</dbReference>
<dbReference type="Pfam" id="PF21176">
    <property type="entry name" value="RecR_HhH"/>
    <property type="match status" value="1"/>
</dbReference>
<dbReference type="Pfam" id="PF02132">
    <property type="entry name" value="RecR_ZnF"/>
    <property type="match status" value="1"/>
</dbReference>
<dbReference type="Pfam" id="PF13662">
    <property type="entry name" value="Toprim_4"/>
    <property type="match status" value="1"/>
</dbReference>
<dbReference type="SMART" id="SM00493">
    <property type="entry name" value="TOPRIM"/>
    <property type="match status" value="1"/>
</dbReference>
<dbReference type="SUPFAM" id="SSF111304">
    <property type="entry name" value="Recombination protein RecR"/>
    <property type="match status" value="1"/>
</dbReference>
<dbReference type="PROSITE" id="PS01300">
    <property type="entry name" value="RECR"/>
    <property type="match status" value="1"/>
</dbReference>
<dbReference type="PROSITE" id="PS50880">
    <property type="entry name" value="TOPRIM"/>
    <property type="match status" value="1"/>
</dbReference>
<accession>C0MCW0</accession>
<sequence>MLYPIPIAKLIESYSKLPGIGVKTATRLAFYTIGMSDEDVNDFAKNLLAAKRELTYCSICGNLTDDDPCHICTDSSRDKETILVVEASKDVSAMEKIQEYHGYYHVLHGLISPMNGVGPDDINLKSLITRLMAGEATEVIVATNATADGEATAMYISRILKPAGIKVTRLARGLAVGSDIEYADEVTLLRAIENRTEL</sequence>